<comment type="function">
    <text evidence="1 3">Subunit 8, of the mitochondrial membrane ATP synthase complex (F(1)F(0) ATP synthase or Complex V) that produces ATP from ADP in the presence of a proton gradient across the membrane which is generated by electron transport complexes of the respiratory chain. ATP synthase complex consist of a soluble F(1) head domain - the catalytic core - and a membrane F(1) domain - the membrane proton channel. These two domains are linked by a central stalk rotating inside the F(1) region and a stationary peripheral stalk. During catalysis, ATP synthesis in the catalytic domain of F(1) is coupled via a rotary mechanism of the central stalk subunits to proton translocation (By similarity). In vivo, can only synthesize ATP although its ATP hydrolase activity can be activated artificially in vitro (By similarity). Part of the complex F(0) domain (By similarity).</text>
</comment>
<comment type="subunit">
    <text evidence="1">Component of the ATP synthase complex composed at least of ATP5F1A/subunit alpha, ATP5F1B/subunit beta, ATP5MC1/subunit c (homooctomer), MT-ATP6/subunit a, MT-ATP8/subunit 8, ATP5ME/subunit e, ATP5MF/subunit f, ATP5MG/subunit g, ATP5MK/subunit k, ATP5MJ/subunit j, ATP5F1C/subunit gamma, ATP5F1D/subunit delta, ATP5F1E/subunit epsilon, ATP5PF/subunit F6, ATP5PB/subunit b, ATP5PD/subunit d, ATP5PO/subunit OSCP. ATP synthase complex consists of a soluble F(1) head domain (subunits alpha(3) and beta(3)) - the catalytic core - and a membrane F(0) domain - the membrane proton channel (subunits c, a, 8, e, f, g, k and j). These two domains are linked by a central stalk (subunits gamma, delta, and epsilon) rotating inside the F1 region and a stationary peripheral stalk (subunits F6, b, d, and OSCP). Interacts with PRICKLE3.</text>
</comment>
<comment type="subcellular location">
    <subcellularLocation>
        <location>Mitochondrion membrane</location>
        <topology>Single-pass membrane protein</topology>
    </subcellularLocation>
</comment>
<comment type="similarity">
    <text evidence="5">Belongs to the ATPase protein 8 family.</text>
</comment>
<evidence type="ECO:0000250" key="1">
    <source>
        <dbReference type="UniProtKB" id="P03928"/>
    </source>
</evidence>
<evidence type="ECO:0000250" key="2">
    <source>
        <dbReference type="UniProtKB" id="P03930"/>
    </source>
</evidence>
<evidence type="ECO:0000250" key="3">
    <source>
        <dbReference type="UniProtKB" id="P19483"/>
    </source>
</evidence>
<evidence type="ECO:0000255" key="4"/>
<evidence type="ECO:0000305" key="5"/>
<evidence type="ECO:0000312" key="6">
    <source>
        <dbReference type="Proteomes" id="UP000002254"/>
    </source>
</evidence>
<organism>
    <name type="scientific">Canis lupus familiaris</name>
    <name type="common">Dog</name>
    <name type="synonym">Canis familiaris</name>
    <dbReference type="NCBI Taxonomy" id="9615"/>
    <lineage>
        <taxon>Eukaryota</taxon>
        <taxon>Metazoa</taxon>
        <taxon>Chordata</taxon>
        <taxon>Craniata</taxon>
        <taxon>Vertebrata</taxon>
        <taxon>Euteleostomi</taxon>
        <taxon>Mammalia</taxon>
        <taxon>Eutheria</taxon>
        <taxon>Laurasiatheria</taxon>
        <taxon>Carnivora</taxon>
        <taxon>Caniformia</taxon>
        <taxon>Canidae</taxon>
        <taxon>Canis</taxon>
    </lineage>
</organism>
<accession>Q9ZZ63</accession>
<dbReference type="EMBL" id="U96639">
    <property type="protein sequence ID" value="AAD04767.1"/>
    <property type="molecule type" value="Genomic_DNA"/>
</dbReference>
<dbReference type="EMBL" id="AY729880">
    <property type="protein sequence ID" value="AAU12160.1"/>
    <property type="molecule type" value="Genomic_DNA"/>
</dbReference>
<dbReference type="PIR" id="T11497">
    <property type="entry name" value="T11497"/>
</dbReference>
<dbReference type="RefSeq" id="NP_008475.1">
    <property type="nucleotide sequence ID" value="NC_002008.4"/>
</dbReference>
<dbReference type="SMR" id="Q9ZZ63"/>
<dbReference type="FunCoup" id="Q9ZZ63">
    <property type="interactions" value="9"/>
</dbReference>
<dbReference type="STRING" id="9615.ENSCAFP00000030313"/>
<dbReference type="PaxDb" id="9612-ENSCAFP00000030313"/>
<dbReference type="GeneID" id="804487"/>
<dbReference type="KEGG" id="cfa:804487"/>
<dbReference type="CTD" id="4509"/>
<dbReference type="eggNOG" id="ENOG502T21P">
    <property type="taxonomic scope" value="Eukaryota"/>
</dbReference>
<dbReference type="HOGENOM" id="CLU_2811757_0_0_1"/>
<dbReference type="InParanoid" id="Q9ZZ63"/>
<dbReference type="OMA" id="LDTSTWF"/>
<dbReference type="TreeFam" id="TF343854"/>
<dbReference type="Proteomes" id="UP000002254">
    <property type="component" value="Mitochondrion"/>
</dbReference>
<dbReference type="Proteomes" id="UP000694429">
    <property type="component" value="Unplaced"/>
</dbReference>
<dbReference type="Proteomes" id="UP000694542">
    <property type="component" value="Unassembled WGS sequence"/>
</dbReference>
<dbReference type="Proteomes" id="UP000805418">
    <property type="component" value="Mitochondrion MT"/>
</dbReference>
<dbReference type="Bgee" id="ENSCAFG00000022728">
    <property type="expression patterns" value="Expressed in adrenal cortex and 44 other cell types or tissues"/>
</dbReference>
<dbReference type="GO" id="GO:0031966">
    <property type="term" value="C:mitochondrial membrane"/>
    <property type="evidence" value="ECO:0007669"/>
    <property type="project" value="UniProtKB-SubCell"/>
</dbReference>
<dbReference type="GO" id="GO:0045259">
    <property type="term" value="C:proton-transporting ATP synthase complex"/>
    <property type="evidence" value="ECO:0000250"/>
    <property type="project" value="UniProtKB"/>
</dbReference>
<dbReference type="GO" id="GO:0015078">
    <property type="term" value="F:proton transmembrane transporter activity"/>
    <property type="evidence" value="ECO:0007669"/>
    <property type="project" value="InterPro"/>
</dbReference>
<dbReference type="GO" id="GO:0015986">
    <property type="term" value="P:proton motive force-driven ATP synthesis"/>
    <property type="evidence" value="ECO:0007669"/>
    <property type="project" value="InterPro"/>
</dbReference>
<dbReference type="InterPro" id="IPR039017">
    <property type="entry name" value="ATP8_mammal"/>
</dbReference>
<dbReference type="InterPro" id="IPR001421">
    <property type="entry name" value="ATP8_metazoa"/>
</dbReference>
<dbReference type="PANTHER" id="PTHR13722">
    <property type="entry name" value="ATP SYNTHASE PROTEIN 8"/>
    <property type="match status" value="1"/>
</dbReference>
<dbReference type="PANTHER" id="PTHR13722:SF0">
    <property type="entry name" value="ATP SYNTHASE PROTEIN 8"/>
    <property type="match status" value="1"/>
</dbReference>
<dbReference type="Pfam" id="PF00895">
    <property type="entry name" value="ATP-synt_8"/>
    <property type="match status" value="1"/>
</dbReference>
<feature type="chain" id="PRO_0000195499" description="ATP synthase F(0) complex subunit 8">
    <location>
        <begin position="1"/>
        <end position="67"/>
    </location>
</feature>
<feature type="transmembrane region" description="Helical" evidence="4">
    <location>
        <begin position="8"/>
        <end position="24"/>
    </location>
</feature>
<feature type="modified residue" description="N6-acetyllysine; alternate" evidence="2">
    <location>
        <position position="54"/>
    </location>
</feature>
<feature type="modified residue" description="N6-succinyllysine; alternate" evidence="2">
    <location>
        <position position="54"/>
    </location>
</feature>
<feature type="modified residue" description="N6-acetyllysine" evidence="2">
    <location>
        <position position="57"/>
    </location>
</feature>
<protein>
    <recommendedName>
        <fullName evidence="1">ATP synthase F(0) complex subunit 8</fullName>
    </recommendedName>
    <alternativeName>
        <fullName>A6L</fullName>
    </alternativeName>
    <alternativeName>
        <fullName>F-ATPase subunit 8</fullName>
    </alternativeName>
</protein>
<gene>
    <name evidence="1" type="primary">MT-ATP8</name>
    <name type="synonym">ATP8</name>
    <name type="synonym">ATPASE8</name>
    <name type="synonym">MTATP8</name>
</gene>
<keyword id="KW-0007">Acetylation</keyword>
<keyword id="KW-0066">ATP synthesis</keyword>
<keyword id="KW-0138">CF(0)</keyword>
<keyword id="KW-0375">Hydrogen ion transport</keyword>
<keyword id="KW-0406">Ion transport</keyword>
<keyword id="KW-0472">Membrane</keyword>
<keyword id="KW-0496">Mitochondrion</keyword>
<keyword id="KW-1185">Reference proteome</keyword>
<keyword id="KW-0812">Transmembrane</keyword>
<keyword id="KW-1133">Transmembrane helix</keyword>
<keyword id="KW-0813">Transport</keyword>
<name>ATP8_CANLF</name>
<sequence>MPQLDTSTWFIMIFSMFLTLFILFQLKISNHYYPENPMTKSAKIAGQHNPWENKWTKIYSLLSLPPQ</sequence>
<reference key="1">
    <citation type="journal article" date="1998" name="Mol. Phylogenet. Evol.">
        <title>The complete nucleotide sequence of the domestic dog (Canis familiaris) mitochondrial genome.</title>
        <authorList>
            <person name="Kim K.S."/>
            <person name="Lee S.E."/>
            <person name="Jeong H.W."/>
            <person name="Ha J.H."/>
        </authorList>
    </citation>
    <scope>NUCLEOTIDE SEQUENCE [GENOMIC DNA]</scope>
    <source>
        <strain evidence="6">Boxer</strain>
    </source>
</reference>
<reference key="2">
    <citation type="submission" date="2004-08" db="EMBL/GenBank/DDBJ databases">
        <title>The complete mitochondrial DNA sequence of the Beagle dog (Canis familiaris).</title>
        <authorList>
            <person name="Zhu S."/>
            <person name="Xu Q."/>
            <person name="Chang H."/>
        </authorList>
    </citation>
    <scope>NUCLEOTIDE SEQUENCE [GENOMIC DNA]</scope>
    <source>
        <strain>Beagle</strain>
    </source>
</reference>
<geneLocation type="mitochondrion"/>
<proteinExistence type="inferred from homology"/>